<proteinExistence type="inferred from homology"/>
<evidence type="ECO:0000255" key="1">
    <source>
        <dbReference type="HAMAP-Rule" id="MF_00225"/>
    </source>
</evidence>
<protein>
    <recommendedName>
        <fullName evidence="1">Dihydroorotate dehydrogenase (quinone)</fullName>
        <ecNumber evidence="1">1.3.5.2</ecNumber>
    </recommendedName>
    <alternativeName>
        <fullName evidence="1">DHOdehase</fullName>
        <shortName evidence="1">DHOD</shortName>
        <shortName evidence="1">DHODase</shortName>
    </alternativeName>
    <alternativeName>
        <fullName evidence="1">Dihydroorotate oxidase</fullName>
    </alternativeName>
</protein>
<keyword id="KW-1003">Cell membrane</keyword>
<keyword id="KW-0285">Flavoprotein</keyword>
<keyword id="KW-0288">FMN</keyword>
<keyword id="KW-0472">Membrane</keyword>
<keyword id="KW-0560">Oxidoreductase</keyword>
<keyword id="KW-0665">Pyrimidine biosynthesis</keyword>
<comment type="function">
    <text evidence="1">Catalyzes the conversion of dihydroorotate to orotate with quinone as electron acceptor.</text>
</comment>
<comment type="catalytic activity">
    <reaction evidence="1">
        <text>(S)-dihydroorotate + a quinone = orotate + a quinol</text>
        <dbReference type="Rhea" id="RHEA:30187"/>
        <dbReference type="ChEBI" id="CHEBI:24646"/>
        <dbReference type="ChEBI" id="CHEBI:30839"/>
        <dbReference type="ChEBI" id="CHEBI:30864"/>
        <dbReference type="ChEBI" id="CHEBI:132124"/>
        <dbReference type="EC" id="1.3.5.2"/>
    </reaction>
</comment>
<comment type="cofactor">
    <cofactor evidence="1">
        <name>FMN</name>
        <dbReference type="ChEBI" id="CHEBI:58210"/>
    </cofactor>
    <text evidence="1">Binds 1 FMN per subunit.</text>
</comment>
<comment type="pathway">
    <text evidence="1">Pyrimidine metabolism; UMP biosynthesis via de novo pathway; orotate from (S)-dihydroorotate (quinone route): step 1/1.</text>
</comment>
<comment type="subunit">
    <text evidence="1">Monomer.</text>
</comment>
<comment type="subcellular location">
    <subcellularLocation>
        <location evidence="1">Cell membrane</location>
        <topology evidence="1">Peripheral membrane protein</topology>
    </subcellularLocation>
</comment>
<comment type="similarity">
    <text evidence="1">Belongs to the dihydroorotate dehydrogenase family. Type 2 subfamily.</text>
</comment>
<accession>A4W8V7</accession>
<name>PYRD_ENT38</name>
<feature type="chain" id="PRO_1000058683" description="Dihydroorotate dehydrogenase (quinone)">
    <location>
        <begin position="1"/>
        <end position="336"/>
    </location>
</feature>
<feature type="active site" description="Nucleophile" evidence="1">
    <location>
        <position position="175"/>
    </location>
</feature>
<feature type="binding site" evidence="1">
    <location>
        <begin position="62"/>
        <end position="66"/>
    </location>
    <ligand>
        <name>FMN</name>
        <dbReference type="ChEBI" id="CHEBI:58210"/>
    </ligand>
</feature>
<feature type="binding site" evidence="1">
    <location>
        <position position="66"/>
    </location>
    <ligand>
        <name>substrate</name>
    </ligand>
</feature>
<feature type="binding site" evidence="1">
    <location>
        <position position="86"/>
    </location>
    <ligand>
        <name>FMN</name>
        <dbReference type="ChEBI" id="CHEBI:58210"/>
    </ligand>
</feature>
<feature type="binding site" evidence="1">
    <location>
        <begin position="111"/>
        <end position="115"/>
    </location>
    <ligand>
        <name>substrate</name>
    </ligand>
</feature>
<feature type="binding site" evidence="1">
    <location>
        <position position="139"/>
    </location>
    <ligand>
        <name>FMN</name>
        <dbReference type="ChEBI" id="CHEBI:58210"/>
    </ligand>
</feature>
<feature type="binding site" evidence="1">
    <location>
        <position position="172"/>
    </location>
    <ligand>
        <name>FMN</name>
        <dbReference type="ChEBI" id="CHEBI:58210"/>
    </ligand>
</feature>
<feature type="binding site" evidence="1">
    <location>
        <position position="172"/>
    </location>
    <ligand>
        <name>substrate</name>
    </ligand>
</feature>
<feature type="binding site" evidence="1">
    <location>
        <position position="177"/>
    </location>
    <ligand>
        <name>substrate</name>
    </ligand>
</feature>
<feature type="binding site" evidence="1">
    <location>
        <position position="217"/>
    </location>
    <ligand>
        <name>FMN</name>
        <dbReference type="ChEBI" id="CHEBI:58210"/>
    </ligand>
</feature>
<feature type="binding site" evidence="1">
    <location>
        <position position="245"/>
    </location>
    <ligand>
        <name>FMN</name>
        <dbReference type="ChEBI" id="CHEBI:58210"/>
    </ligand>
</feature>
<feature type="binding site" evidence="1">
    <location>
        <begin position="246"/>
        <end position="247"/>
    </location>
    <ligand>
        <name>substrate</name>
    </ligand>
</feature>
<feature type="binding site" evidence="1">
    <location>
        <position position="268"/>
    </location>
    <ligand>
        <name>FMN</name>
        <dbReference type="ChEBI" id="CHEBI:58210"/>
    </ligand>
</feature>
<feature type="binding site" evidence="1">
    <location>
        <position position="297"/>
    </location>
    <ligand>
        <name>FMN</name>
        <dbReference type="ChEBI" id="CHEBI:58210"/>
    </ligand>
</feature>
<feature type="binding site" evidence="1">
    <location>
        <begin position="318"/>
        <end position="319"/>
    </location>
    <ligand>
        <name>FMN</name>
        <dbReference type="ChEBI" id="CHEBI:58210"/>
    </ligand>
</feature>
<dbReference type="EC" id="1.3.5.2" evidence="1"/>
<dbReference type="EMBL" id="CP000653">
    <property type="protein sequence ID" value="ABP60137.1"/>
    <property type="molecule type" value="Genomic_DNA"/>
</dbReference>
<dbReference type="RefSeq" id="WP_012016854.1">
    <property type="nucleotide sequence ID" value="NC_009436.1"/>
</dbReference>
<dbReference type="SMR" id="A4W8V7"/>
<dbReference type="STRING" id="399742.Ent638_1457"/>
<dbReference type="KEGG" id="ent:Ent638_1457"/>
<dbReference type="eggNOG" id="COG0167">
    <property type="taxonomic scope" value="Bacteria"/>
</dbReference>
<dbReference type="HOGENOM" id="CLU_013640_2_0_6"/>
<dbReference type="OrthoDB" id="9802377at2"/>
<dbReference type="UniPathway" id="UPA00070">
    <property type="reaction ID" value="UER00946"/>
</dbReference>
<dbReference type="Proteomes" id="UP000000230">
    <property type="component" value="Chromosome"/>
</dbReference>
<dbReference type="GO" id="GO:0005737">
    <property type="term" value="C:cytoplasm"/>
    <property type="evidence" value="ECO:0007669"/>
    <property type="project" value="InterPro"/>
</dbReference>
<dbReference type="GO" id="GO:0005886">
    <property type="term" value="C:plasma membrane"/>
    <property type="evidence" value="ECO:0007669"/>
    <property type="project" value="UniProtKB-SubCell"/>
</dbReference>
<dbReference type="GO" id="GO:0106430">
    <property type="term" value="F:dihydroorotate dehydrogenase (quinone) activity"/>
    <property type="evidence" value="ECO:0007669"/>
    <property type="project" value="UniProtKB-EC"/>
</dbReference>
<dbReference type="GO" id="GO:0006207">
    <property type="term" value="P:'de novo' pyrimidine nucleobase biosynthetic process"/>
    <property type="evidence" value="ECO:0007669"/>
    <property type="project" value="InterPro"/>
</dbReference>
<dbReference type="GO" id="GO:0044205">
    <property type="term" value="P:'de novo' UMP biosynthetic process"/>
    <property type="evidence" value="ECO:0007669"/>
    <property type="project" value="UniProtKB-UniRule"/>
</dbReference>
<dbReference type="CDD" id="cd04738">
    <property type="entry name" value="DHOD_2_like"/>
    <property type="match status" value="1"/>
</dbReference>
<dbReference type="FunFam" id="3.20.20.70:FF:000028">
    <property type="entry name" value="Dihydroorotate dehydrogenase (quinone)"/>
    <property type="match status" value="1"/>
</dbReference>
<dbReference type="Gene3D" id="3.20.20.70">
    <property type="entry name" value="Aldolase class I"/>
    <property type="match status" value="1"/>
</dbReference>
<dbReference type="HAMAP" id="MF_00225">
    <property type="entry name" value="DHO_dh_type2"/>
    <property type="match status" value="1"/>
</dbReference>
<dbReference type="InterPro" id="IPR013785">
    <property type="entry name" value="Aldolase_TIM"/>
</dbReference>
<dbReference type="InterPro" id="IPR050074">
    <property type="entry name" value="DHO_dehydrogenase"/>
</dbReference>
<dbReference type="InterPro" id="IPR012135">
    <property type="entry name" value="Dihydroorotate_DH_1_2"/>
</dbReference>
<dbReference type="InterPro" id="IPR005719">
    <property type="entry name" value="Dihydroorotate_DH_2"/>
</dbReference>
<dbReference type="InterPro" id="IPR005720">
    <property type="entry name" value="Dihydroorotate_DH_cat"/>
</dbReference>
<dbReference type="InterPro" id="IPR001295">
    <property type="entry name" value="Dihydroorotate_DH_CS"/>
</dbReference>
<dbReference type="NCBIfam" id="NF003644">
    <property type="entry name" value="PRK05286.1-1"/>
    <property type="match status" value="1"/>
</dbReference>
<dbReference type="NCBIfam" id="NF003645">
    <property type="entry name" value="PRK05286.1-2"/>
    <property type="match status" value="1"/>
</dbReference>
<dbReference type="NCBIfam" id="NF003646">
    <property type="entry name" value="PRK05286.1-4"/>
    <property type="match status" value="1"/>
</dbReference>
<dbReference type="NCBIfam" id="NF003652">
    <property type="entry name" value="PRK05286.2-5"/>
    <property type="match status" value="1"/>
</dbReference>
<dbReference type="NCBIfam" id="TIGR01036">
    <property type="entry name" value="pyrD_sub2"/>
    <property type="match status" value="1"/>
</dbReference>
<dbReference type="PANTHER" id="PTHR48109:SF4">
    <property type="entry name" value="DIHYDROOROTATE DEHYDROGENASE (QUINONE), MITOCHONDRIAL"/>
    <property type="match status" value="1"/>
</dbReference>
<dbReference type="PANTHER" id="PTHR48109">
    <property type="entry name" value="DIHYDROOROTATE DEHYDROGENASE (QUINONE), MITOCHONDRIAL-RELATED"/>
    <property type="match status" value="1"/>
</dbReference>
<dbReference type="Pfam" id="PF01180">
    <property type="entry name" value="DHO_dh"/>
    <property type="match status" value="1"/>
</dbReference>
<dbReference type="PIRSF" id="PIRSF000164">
    <property type="entry name" value="DHO_oxidase"/>
    <property type="match status" value="1"/>
</dbReference>
<dbReference type="SUPFAM" id="SSF51395">
    <property type="entry name" value="FMN-linked oxidoreductases"/>
    <property type="match status" value="1"/>
</dbReference>
<dbReference type="PROSITE" id="PS00911">
    <property type="entry name" value="DHODEHASE_1"/>
    <property type="match status" value="1"/>
</dbReference>
<dbReference type="PROSITE" id="PS00912">
    <property type="entry name" value="DHODEHASE_2"/>
    <property type="match status" value="1"/>
</dbReference>
<sequence length="336" mass="36785">MYYPFVRKALFQLDPERAHELTFQQLRRITGTPLEALVRQKVQEKPVQCMGLTFKNPLGLAAGLDKNGECIDALGAMGFGSIEVGTVTPRPQAGNDKPRLFRLVEAEGLINRMGFNNHGVDHLIENVKKAHFDGVLGINIGKNKDTPVEQGKDDYLICMEKVYAYAGYIAVNISSPNTPGLRTLQYGEALDDLLSAIKNKQNELQEIHHKYVPVAVKIAPDLSVEELIQVADSLVRHNIDGVIATNTTLDRSLVNGMKHCDEMGGLSGRPVQLKSTEIIRALSAELKGRLPIIGVGGIDSVIAAREKMAAGATLVQIYSGFIFKGPQLIKEIVNHI</sequence>
<organism>
    <name type="scientific">Enterobacter sp. (strain 638)</name>
    <dbReference type="NCBI Taxonomy" id="399742"/>
    <lineage>
        <taxon>Bacteria</taxon>
        <taxon>Pseudomonadati</taxon>
        <taxon>Pseudomonadota</taxon>
        <taxon>Gammaproteobacteria</taxon>
        <taxon>Enterobacterales</taxon>
        <taxon>Enterobacteriaceae</taxon>
        <taxon>Enterobacter</taxon>
    </lineage>
</organism>
<reference key="1">
    <citation type="journal article" date="2010" name="PLoS Genet.">
        <title>Genome sequence of the plant growth promoting endophytic bacterium Enterobacter sp. 638.</title>
        <authorList>
            <person name="Taghavi S."/>
            <person name="van der Lelie D."/>
            <person name="Hoffman A."/>
            <person name="Zhang Y.B."/>
            <person name="Walla M.D."/>
            <person name="Vangronsveld J."/>
            <person name="Newman L."/>
            <person name="Monchy S."/>
        </authorList>
    </citation>
    <scope>NUCLEOTIDE SEQUENCE [LARGE SCALE GENOMIC DNA]</scope>
    <source>
        <strain>638</strain>
    </source>
</reference>
<gene>
    <name evidence="1" type="primary">pyrD</name>
    <name type="ordered locus">Ent638_1457</name>
</gene>